<sequence length="400" mass="43645">MGGYSSKPRKGMGTNLSVPNPLGFLPDHQLDPAFGANSNNPDWDFNPNKDPWPEAWQVGAGAFGPGFTPPHGSLLGWSPQAQGILTTVPATPPPASTNRQSGRQPTPISPPLRDSHPQAMQWNSTTFHQALLDPRVRGLYFPAGGSSSGTANPVPTTASPISSIFSRTGDPVPKMENTTSGFLGPLLVLQAGFFLLTRILTIPQSLDSWWTSLNFLGGAPACPGQNSQSPTSNHSPTSCPPICPGYRWMCLRRFIIFLFILLLCLIFLLVLLDYQGMLPVCPLIPGTSTTSTGPCKTCTTPAQGTSMFPSCCCTKPSDGNCTCIPIPSSWAFAKFLWEWASVRFSWLSLLAPFVQWFVGLSPTVWLSVIWMMWYWGPSLYNILSPFLPLLPIFFCLWVYI</sequence>
<feature type="initiator methionine" description="Removed; by host" evidence="3">
    <location>
        <position position="1"/>
    </location>
</feature>
<feature type="chain" id="PRO_0000319080" description="Large envelope protein" evidence="3">
    <location>
        <begin position="2"/>
        <end position="400"/>
    </location>
</feature>
<feature type="topological domain" description="Intravirion; in internal conformation" evidence="3">
    <location>
        <begin position="2"/>
        <end position="253"/>
    </location>
</feature>
<feature type="topological domain" description="Virion surface; in external conformation" evidence="3">
    <location>
        <begin position="2"/>
        <end position="181"/>
    </location>
</feature>
<feature type="transmembrane region" description="Helical; Name=TM1; Note=In external conformation" evidence="3">
    <location>
        <begin position="182"/>
        <end position="202"/>
    </location>
</feature>
<feature type="topological domain" description="Intravirion; in external conformation" evidence="3">
    <location>
        <begin position="203"/>
        <end position="253"/>
    </location>
</feature>
<feature type="transmembrane region" description="Helical; Name=TM2" evidence="3">
    <location>
        <begin position="254"/>
        <end position="274"/>
    </location>
</feature>
<feature type="topological domain" description="Virion surface" evidence="3">
    <location>
        <begin position="275"/>
        <end position="348"/>
    </location>
</feature>
<feature type="transmembrane region" description="Helical" evidence="3">
    <location>
        <begin position="349"/>
        <end position="369"/>
    </location>
</feature>
<feature type="topological domain" description="Intravirion" evidence="3">
    <location>
        <begin position="370"/>
        <end position="375"/>
    </location>
</feature>
<feature type="transmembrane region" description="Helical; Name=TM3" evidence="3">
    <location>
        <begin position="376"/>
        <end position="398"/>
    </location>
</feature>
<feature type="topological domain" description="Virion surface" evidence="3">
    <location>
        <begin position="399"/>
        <end position="400"/>
    </location>
</feature>
<feature type="region of interest" description="Disordered" evidence="4">
    <location>
        <begin position="1"/>
        <end position="42"/>
    </location>
</feature>
<feature type="region of interest" description="Pre-S" evidence="3">
    <location>
        <begin position="2"/>
        <end position="174"/>
    </location>
</feature>
<feature type="region of interest" description="Pre-S1" evidence="3">
    <location>
        <begin position="2"/>
        <end position="119"/>
    </location>
</feature>
<feature type="region of interest" description="Disordered" evidence="4">
    <location>
        <begin position="84"/>
        <end position="118"/>
    </location>
</feature>
<feature type="region of interest" description="Pre-S2" evidence="3">
    <location>
        <begin position="120"/>
        <end position="174"/>
    </location>
</feature>
<feature type="lipid moiety-binding region" description="N-myristoyl glycine; by host" evidence="3">
    <location>
        <position position="2"/>
    </location>
</feature>
<feature type="glycosylation site" description="N-linked (GlcNAc...) asparagine; by host" evidence="3">
    <location>
        <position position="320"/>
    </location>
</feature>
<feature type="splice variant" id="VSP_031382" description="In isoform S." evidence="5">
    <location>
        <begin position="1"/>
        <end position="174"/>
    </location>
</feature>
<feature type="splice variant" id="VSP_031383" description="In isoform M." evidence="5">
    <location>
        <begin position="1"/>
        <end position="119"/>
    </location>
</feature>
<feature type="modified residue" description="N-acetylmethionine" evidence="5">
    <location sequence="Q9E6S4-2">
        <position position="1"/>
    </location>
</feature>
<feature type="glycosylation site" description="N-linked (GlcNAc...) asparagine" evidence="5">
    <location sequence="Q9E6S4-2">
        <position position="4"/>
    </location>
</feature>
<dbReference type="EMBL" id="AF241410">
    <property type="protein sequence ID" value="AAG17596.1"/>
    <property type="molecule type" value="Genomic_DNA"/>
</dbReference>
<dbReference type="EMBL" id="AF241410">
    <property type="protein sequence ID" value="AAG17597.1"/>
    <property type="status" value="ALT_INIT"/>
    <property type="molecule type" value="Genomic_DNA"/>
</dbReference>
<dbReference type="EMBL" id="AF241410">
    <property type="protein sequence ID" value="AAG17599.1"/>
    <property type="status" value="ALT_INIT"/>
    <property type="molecule type" value="Genomic_DNA"/>
</dbReference>
<dbReference type="PIR" id="JQ2054">
    <property type="entry name" value="JQ2054"/>
</dbReference>
<dbReference type="PIR" id="JQ2094">
    <property type="entry name" value="JQ2094"/>
</dbReference>
<dbReference type="PIR" id="JQ2095">
    <property type="entry name" value="JQ2095"/>
</dbReference>
<dbReference type="PIR" id="JQ2096">
    <property type="entry name" value="JQ2096"/>
</dbReference>
<dbReference type="PIR" id="JQ2097">
    <property type="entry name" value="JQ2097"/>
</dbReference>
<dbReference type="PIR" id="JQ2098">
    <property type="entry name" value="JQ2098"/>
</dbReference>
<dbReference type="PIR" id="JQ2099">
    <property type="entry name" value="JQ2099"/>
</dbReference>
<dbReference type="PIR" id="JQ2100">
    <property type="entry name" value="JQ2100"/>
</dbReference>
<dbReference type="PIR" id="JQ2101">
    <property type="entry name" value="JQ2101"/>
</dbReference>
<dbReference type="PIR" id="JQ2102">
    <property type="entry name" value="JQ2102"/>
</dbReference>
<dbReference type="PIR" id="JQ2106">
    <property type="entry name" value="JQ2106"/>
</dbReference>
<dbReference type="PIR" id="JQ2108">
    <property type="entry name" value="JQ2108"/>
</dbReference>
<dbReference type="PIR" id="JQ2109">
    <property type="entry name" value="JQ2109"/>
</dbReference>
<dbReference type="PIR" id="JQ2111">
    <property type="entry name" value="JQ2111"/>
</dbReference>
<dbReference type="PIR" id="JQ2112">
    <property type="entry name" value="JQ2112"/>
</dbReference>
<dbReference type="PIR" id="JQ2116">
    <property type="entry name" value="JQ2116"/>
</dbReference>
<dbReference type="SMR" id="Q9E6S4"/>
<dbReference type="GlyCosmos" id="Q9E6S4">
    <property type="glycosylation" value="2 sites, No reported glycans"/>
</dbReference>
<dbReference type="Proteomes" id="UP000007920">
    <property type="component" value="Genome"/>
</dbReference>
<dbReference type="GO" id="GO:0016020">
    <property type="term" value="C:membrane"/>
    <property type="evidence" value="ECO:0007669"/>
    <property type="project" value="UniProtKB-UniRule"/>
</dbReference>
<dbReference type="GO" id="GO:0019031">
    <property type="term" value="C:viral envelope"/>
    <property type="evidence" value="ECO:0007669"/>
    <property type="project" value="UniProtKB-KW"/>
</dbReference>
<dbReference type="GO" id="GO:0055036">
    <property type="term" value="C:virion membrane"/>
    <property type="evidence" value="ECO:0007669"/>
    <property type="project" value="UniProtKB-SubCell"/>
</dbReference>
<dbReference type="GO" id="GO:0075513">
    <property type="term" value="P:caveolin-mediated endocytosis of virus by host cell"/>
    <property type="evidence" value="ECO:0007669"/>
    <property type="project" value="UniProtKB-KW"/>
</dbReference>
<dbReference type="GO" id="GO:0039654">
    <property type="term" value="P:fusion of virus membrane with host endosome membrane"/>
    <property type="evidence" value="ECO:0007669"/>
    <property type="project" value="UniProtKB-KW"/>
</dbReference>
<dbReference type="GO" id="GO:0019062">
    <property type="term" value="P:virion attachment to host cell"/>
    <property type="evidence" value="ECO:0007669"/>
    <property type="project" value="UniProtKB-UniRule"/>
</dbReference>
<dbReference type="HAMAP" id="MF_04075">
    <property type="entry name" value="HBV_HBSAG"/>
    <property type="match status" value="1"/>
</dbReference>
<dbReference type="InterPro" id="IPR000349">
    <property type="entry name" value="HBV_HBSAG"/>
</dbReference>
<dbReference type="Pfam" id="PF00695">
    <property type="entry name" value="vMSA"/>
    <property type="match status" value="1"/>
</dbReference>
<accession>Q9E6S4</accession>
<accession>Q9E6S3</accession>
<accession>Q9E6S9</accession>
<keyword id="KW-0007">Acetylation</keyword>
<keyword id="KW-0024">Alternative initiation</keyword>
<keyword id="KW-0025">Alternative splicing</keyword>
<keyword id="KW-1166">Caveolin-mediated endocytosis of virus by host</keyword>
<keyword id="KW-1170">Fusion of virus membrane with host endosomal membrane</keyword>
<keyword id="KW-1168">Fusion of virus membrane with host membrane</keyword>
<keyword id="KW-0325">Glycoprotein</keyword>
<keyword id="KW-0945">Host-virus interaction</keyword>
<keyword id="KW-0449">Lipoprotein</keyword>
<keyword id="KW-0472">Membrane</keyword>
<keyword id="KW-0519">Myristate</keyword>
<keyword id="KW-0812">Transmembrane</keyword>
<keyword id="KW-1133">Transmembrane helix</keyword>
<keyword id="KW-1161">Viral attachment to host cell</keyword>
<keyword id="KW-0261">Viral envelope protein</keyword>
<keyword id="KW-1162">Viral penetration into host cytoplasm</keyword>
<keyword id="KW-0946">Virion</keyword>
<keyword id="KW-1164">Virus endocytosis by host</keyword>
<keyword id="KW-1160">Virus entry into host cell</keyword>
<proteinExistence type="evidence at protein level"/>
<protein>
    <recommendedName>
        <fullName evidence="3">Large envelope protein</fullName>
    </recommendedName>
    <alternativeName>
        <fullName evidence="3">L glycoprotein</fullName>
    </alternativeName>
    <alternativeName>
        <fullName evidence="3">L-HBsAg</fullName>
        <shortName evidence="3">LHB</shortName>
    </alternativeName>
    <alternativeName>
        <fullName evidence="3">Large S protein</fullName>
    </alternativeName>
    <alternativeName>
        <fullName evidence="3">Large surface protein</fullName>
    </alternativeName>
    <alternativeName>
        <fullName evidence="3">Major surface antigen</fullName>
    </alternativeName>
</protein>
<organismHost>
    <name type="scientific">Homo sapiens</name>
    <name type="common">Human</name>
    <dbReference type="NCBI Taxonomy" id="9606"/>
</organismHost>
<organismHost>
    <name type="scientific">Pan troglodytes</name>
    <name type="common">Chimpanzee</name>
    <dbReference type="NCBI Taxonomy" id="9598"/>
</organismHost>
<reference key="1">
    <citation type="journal article" date="2000" name="J. Gen. Virol.">
        <title>An aberrant genotype revealed in recombinant hepatitis B virus strains from Vietnam.</title>
        <authorList>
            <person name="Hannoun C."/>
            <person name="Norder H."/>
            <person name="Lindh M."/>
        </authorList>
    </citation>
    <scope>NUCLEOTIDE SEQUENCE [GENOMIC DNA]</scope>
</reference>
<reference key="2">
    <citation type="journal article" date="1996" name="Intervirology">
        <title>Functions of the large hepatitis B virus surface protein in viral particle morphogenesis.</title>
        <authorList>
            <person name="Bruss V."/>
            <person name="Gerhardt E."/>
            <person name="Vieluf K."/>
            <person name="Wunderlich G."/>
        </authorList>
    </citation>
    <scope>REVIEW</scope>
</reference>
<reference key="3">
    <citation type="journal article" date="1998" name="Adv. Exp. Med. Biol.">
        <title>Role of glycan processing in hepatitis B virus envelope protein trafficking.</title>
        <authorList>
            <person name="Block T.M."/>
            <person name="Lu X."/>
            <person name="Mehta A."/>
            <person name="Park J."/>
            <person name="Blumberg B.S."/>
            <person name="Dwek R."/>
        </authorList>
    </citation>
    <scope>REVIEW</scope>
</reference>
<reference key="4">
    <citation type="journal article" date="2004" name="Virus Res.">
        <title>Envelopment of the hepatitis B virus nucleocapsid.</title>
        <authorList>
            <person name="Bruss V."/>
        </authorList>
    </citation>
    <scope>REVIEW</scope>
</reference>
<reference key="5">
    <citation type="journal article" date="2006" name="Cancer Sci.">
        <title>Hepatitis B virus pre-S mutants, endoplasmic reticulum stress and hepatocarcinogenesis.</title>
        <authorList>
            <person name="Wang H.C."/>
            <person name="Huang W."/>
            <person name="Lai M.D."/>
            <person name="Su I.J."/>
        </authorList>
    </citation>
    <scope>REVIEW</scope>
</reference>
<gene>
    <name evidence="3" type="primary">S</name>
</gene>
<name>HBSAG_HBVC0</name>
<comment type="function">
    <text evidence="3">The large envelope protein exists in two topological conformations, one which is termed 'external' or Le-HBsAg and the other 'internal' or Li-HBsAg. In its external conformation the protein attaches the virus to cell receptors and thereby initiating infection. This interaction determines the species specificity and liver tropism. This attachment induces virion internalization predominantly through caveolin-mediated endocytosis. The large envelope protein also assures fusion between virion membrane and endosomal membrane. In its internal conformation the protein plays a role in virion morphogenesis and mediates the contact with the nucleocapsid like a matrix protein.</text>
</comment>
<comment type="function">
    <text evidence="3">The middle envelope protein plays an important role in the budding of the virion. It is involved in the induction of budding in a nucleocapsid independent way. In this process the majority of envelope proteins bud to form subviral lipoprotein particles of 22 nm of diameter that do not contain a nucleocapsid.</text>
</comment>
<comment type="subunit">
    <molecule>Isoform L</molecule>
    <text evidence="2">In its internal form (Li-HBsAg), interacts with the capsid protein and with the isoform S. Interacts with host chaperone CANX.</text>
</comment>
<comment type="subunit">
    <molecule>Isoform M</molecule>
    <text evidence="2">Associates with host chaperone CANX through its pre-S2 N glycan; this association may be essential for isoform M proper secretion.</text>
</comment>
<comment type="subunit">
    <molecule>Isoform S</molecule>
    <text evidence="2">Interacts with isoform L. Interacts with the antigens of satellite virus HDV (HDVAgs); this interaction is required for encapsidation of HDV genomic RNA.</text>
</comment>
<comment type="subcellular location">
    <subcellularLocation>
        <location evidence="3">Virion membrane</location>
    </subcellularLocation>
</comment>
<comment type="alternative products">
    <event type="alternative splicing"/>
    <event type="alternative initiation"/>
    <isoform>
        <id>Q9E6S4-1</id>
        <name>L</name>
        <name>Large envelope protein</name>
        <name>LHB</name>
        <name>L-HBsAg</name>
        <sequence type="displayed"/>
    </isoform>
    <isoform>
        <id>Q9E6S4-2</id>
        <name>M</name>
        <name>Middle envelope protein</name>
        <name>MHB</name>
        <name>M-HBsAg</name>
        <sequence type="described" ref="VSP_031383"/>
    </isoform>
    <isoform>
        <id>Q9E6S4-3</id>
        <name>S</name>
        <name>Small envelope protein</name>
        <name>SHB</name>
        <name>S-HBsAg</name>
        <sequence type="described" ref="VSP_031382"/>
    </isoform>
</comment>
<comment type="domain">
    <text evidence="3">The large envelope protein is synthesized with the pre-S region at the cytosolic side of the endoplasmic reticulum and, hence will be within the virion after budding. Therefore the pre-S region is not N-glycosylated. Later a post-translational translocation of N-terminal pre-S and TM1 domains occur in about 50% of proteins at the virion surface. These molecules change their topology by an unknown mechanism, resulting in exposure of pre-S region at virion surface. For isoform M in contrast, the pre-S2 region is translocated cotranslationally to the endoplasmic reticulum lumen and is N-glycosylated.</text>
</comment>
<comment type="PTM">
    <text evidence="1 3">Isoform M is N-terminally acetylated by host at a ratio of 90%, and N-glycosylated by host at the pre-S2 region.</text>
</comment>
<comment type="PTM">
    <text evidence="3">Myristoylated.</text>
</comment>
<comment type="biotechnology">
    <text>Systematic vaccination of individuals at risk of exposure to the virus has been the main method of controlling the morbidity and mortality associated with hepatitis B. The first hepatitis B vaccine was manufactured by the purification and inactivation of HBsAg obtained from the plasma of chronic hepatitis B virus carriers. The vaccine is now produced by recombinant DNA techniques and expression of the S isoform in yeast cells. The pre-S region do not seem to induce strong enough antigenic response.</text>
</comment>
<comment type="similarity">
    <text evidence="3">Belongs to the orthohepadnavirus major surface antigen family.</text>
</comment>
<comment type="sequence caution" evidence="5">
    <conflict type="erroneous initiation">
        <sequence resource="EMBL-CDS" id="AAG17597"/>
    </conflict>
</comment>
<comment type="sequence caution" evidence="5">
    <conflict type="erroneous initiation">
        <sequence resource="EMBL-CDS" id="AAG17599"/>
    </conflict>
</comment>
<organism>
    <name type="scientific">Hepatitis B virus genotype C (isolate Vietnam/3270/2000)</name>
    <name type="common">HBV-C</name>
    <dbReference type="NCBI Taxonomy" id="489472"/>
    <lineage>
        <taxon>Viruses</taxon>
        <taxon>Riboviria</taxon>
        <taxon>Pararnavirae</taxon>
        <taxon>Artverviricota</taxon>
        <taxon>Revtraviricetes</taxon>
        <taxon>Blubervirales</taxon>
        <taxon>Hepadnaviridae</taxon>
        <taxon>Orthohepadnavirus</taxon>
        <taxon>Hepatitis B virus</taxon>
        <taxon>hepatitis B virus genotype C</taxon>
    </lineage>
</organism>
<evidence type="ECO:0000250" key="1">
    <source>
        <dbReference type="UniProtKB" id="P03138"/>
    </source>
</evidence>
<evidence type="ECO:0000250" key="2">
    <source>
        <dbReference type="UniProtKB" id="P03141"/>
    </source>
</evidence>
<evidence type="ECO:0000255" key="3">
    <source>
        <dbReference type="HAMAP-Rule" id="MF_04075"/>
    </source>
</evidence>
<evidence type="ECO:0000256" key="4">
    <source>
        <dbReference type="SAM" id="MobiDB-lite"/>
    </source>
</evidence>
<evidence type="ECO:0000305" key="5"/>